<dbReference type="GO" id="GO:0005576">
    <property type="term" value="C:extracellular region"/>
    <property type="evidence" value="ECO:0007669"/>
    <property type="project" value="UniProtKB-SubCell"/>
</dbReference>
<dbReference type="GO" id="GO:0005179">
    <property type="term" value="F:hormone activity"/>
    <property type="evidence" value="ECO:0007669"/>
    <property type="project" value="UniProtKB-KW"/>
</dbReference>
<dbReference type="GO" id="GO:0007218">
    <property type="term" value="P:neuropeptide signaling pathway"/>
    <property type="evidence" value="ECO:0007669"/>
    <property type="project" value="UniProtKB-KW"/>
</dbReference>
<dbReference type="InterPro" id="IPR002047">
    <property type="entry name" value="Adipokinetic_hormone_CS"/>
</dbReference>
<dbReference type="PROSITE" id="PS00256">
    <property type="entry name" value="AKH"/>
    <property type="match status" value="1"/>
</dbReference>
<sequence>QVNFSPGWGT</sequence>
<proteinExistence type="evidence at protein level"/>
<protein>
    <recommendedName>
        <fullName evidence="1">Hypertrehalosaemic factor</fullName>
    </recommendedName>
    <alternativeName>
        <fullName evidence="4">Adipokinetic hormone 1</fullName>
        <shortName evidence="4">DipPu-AKH-1</shortName>
    </alternativeName>
    <alternativeName>
        <fullName evidence="1">Hypertrehalosaemic neuropeptide</fullName>
    </alternativeName>
</protein>
<evidence type="ECO:0000250" key="1">
    <source>
        <dbReference type="UniProtKB" id="P67790"/>
    </source>
</evidence>
<evidence type="ECO:0000255" key="2"/>
<evidence type="ECO:0000269" key="3">
    <source>
    </source>
</evidence>
<evidence type="ECO:0000303" key="4">
    <source>
    </source>
</evidence>
<evidence type="ECO:0000305" key="5"/>
<keyword id="KW-0027">Amidation</keyword>
<keyword id="KW-0903">Direct protein sequencing</keyword>
<keyword id="KW-0372">Hormone</keyword>
<keyword id="KW-0527">Neuropeptide</keyword>
<keyword id="KW-0873">Pyrrolidone carboxylic acid</keyword>
<keyword id="KW-0964">Secreted</keyword>
<name>HTF_DIPPU</name>
<feature type="peptide" id="PRO_0000378643" description="Hypertrehalosaemic factor" evidence="3">
    <location>
        <begin position="1"/>
        <end position="10"/>
    </location>
</feature>
<feature type="modified residue" description="Pyrrolidone carboxylic acid" evidence="3">
    <location>
        <position position="1"/>
    </location>
</feature>
<feature type="modified residue" description="Threonine amide" evidence="3">
    <location>
        <position position="10"/>
    </location>
</feature>
<comment type="function">
    <text evidence="5">Hypertrehalosaemic factors are neuropeptides that elevate the level of trehalose in the hemolymph (trehalose is the major carbohydrate in the hemolymph of insects).</text>
</comment>
<comment type="subcellular location">
    <subcellularLocation>
        <location evidence="5">Secreted</location>
    </subcellularLocation>
</comment>
<comment type="similarity">
    <text evidence="2">Belongs to the AKH/HRTH/RPCH family.</text>
</comment>
<organism>
    <name type="scientific">Diploptera punctata</name>
    <name type="common">Pacific beetle cockroach</name>
    <dbReference type="NCBI Taxonomy" id="6984"/>
    <lineage>
        <taxon>Eukaryota</taxon>
        <taxon>Metazoa</taxon>
        <taxon>Ecdysozoa</taxon>
        <taxon>Arthropoda</taxon>
        <taxon>Hexapoda</taxon>
        <taxon>Insecta</taxon>
        <taxon>Pterygota</taxon>
        <taxon>Neoptera</taxon>
        <taxon>Polyneoptera</taxon>
        <taxon>Dictyoptera</taxon>
        <taxon>Blattodea</taxon>
        <taxon>Blaberoidea</taxon>
        <taxon>Blaberidae</taxon>
        <taxon>Diplopterinae</taxon>
        <taxon>Diploptera</taxon>
    </lineage>
</organism>
<reference evidence="5" key="1">
    <citation type="journal article" date="2009" name="BMC Evol. Biol.">
        <title>A proteomic approach for studying insect phylogeny: CAPA peptides of ancient insect taxa (Dictyoptera, Blattoptera) as a test case.</title>
        <authorList>
            <person name="Roth S."/>
            <person name="Fromm B."/>
            <person name="Gaede G."/>
            <person name="Predel R."/>
        </authorList>
    </citation>
    <scope>PROTEIN SEQUENCE</scope>
    <scope>PYROGLUTAMATE FORMATION AT GLN-1</scope>
    <scope>AMIDATION AT THR-10</scope>
    <source>
        <tissue evidence="3">Corpora cardiaca</tissue>
    </source>
</reference>
<accession>P85602</accession>